<reference key="1">
    <citation type="journal article" date="2009" name="Genome Res.">
        <title>Comparative genomic analyses of the human fungal pathogens Coccidioides and their relatives.</title>
        <authorList>
            <person name="Sharpton T.J."/>
            <person name="Stajich J.E."/>
            <person name="Rounsley S.D."/>
            <person name="Gardner M.J."/>
            <person name="Wortman J.R."/>
            <person name="Jordar V.S."/>
            <person name="Maiti R."/>
            <person name="Kodira C.D."/>
            <person name="Neafsey D.E."/>
            <person name="Zeng Q."/>
            <person name="Hung C.-Y."/>
            <person name="McMahan C."/>
            <person name="Muszewska A."/>
            <person name="Grynberg M."/>
            <person name="Mandel M.A."/>
            <person name="Kellner E.M."/>
            <person name="Barker B.M."/>
            <person name="Galgiani J.N."/>
            <person name="Orbach M.J."/>
            <person name="Kirkland T.N."/>
            <person name="Cole G.T."/>
            <person name="Henn M.R."/>
            <person name="Birren B.W."/>
            <person name="Taylor J.W."/>
        </authorList>
    </citation>
    <scope>NUCLEOTIDE SEQUENCE [LARGE SCALE GENOMIC DNA]</scope>
    <source>
        <strain>NAm1 / WU24</strain>
    </source>
</reference>
<keyword id="KW-0963">Cytoplasm</keyword>
<keyword id="KW-0539">Nucleus</keyword>
<keyword id="KW-0653">Protein transport</keyword>
<keyword id="KW-1185">Reference proteome</keyword>
<keyword id="KW-0813">Transport</keyword>
<comment type="function">
    <text evidence="1">Component of the nascent polypeptide-associated complex (NAC), a dynamic component of the ribosomal exit tunnel, protecting the emerging polypeptides from interaction with other cytoplasmic proteins to ensure appropriate nascent protein targeting. The NAC complex also promotes mitochondrial protein import by enhancing productive ribosome interactions with the outer mitochondrial membrane and blocks the inappropriate interaction of ribosomes translating non-secretory nascent polypeptides with translocation sites in the membrane of the endoplasmic reticulum. EGD2 may also be involved in transcription regulation (By similarity).</text>
</comment>
<comment type="subunit">
    <text evidence="1">Part of the nascent polypeptide-associated complex (NAC), consisting of EGD2 and EGD1. NAC associates with ribosomes via EGD1 (By similarity).</text>
</comment>
<comment type="subcellular location">
    <subcellularLocation>
        <location evidence="1">Cytoplasm</location>
    </subcellularLocation>
    <subcellularLocation>
        <location evidence="1">Nucleus</location>
    </subcellularLocation>
    <text evidence="1">Predominantly cytoplasmic, may also transiently localize to the nucleus.</text>
</comment>
<comment type="similarity">
    <text evidence="4">Belongs to the NAC-alpha family.</text>
</comment>
<comment type="sequence caution" evidence="4">
    <conflict type="erroneous gene model prediction">
        <sequence resource="EMBL-CDS" id="EDN08600"/>
    </conflict>
</comment>
<comment type="sequence caution" evidence="4">
    <conflict type="frameshift">
        <sequence resource="EMBL-CDS" id="EDN08600"/>
    </conflict>
</comment>
<organism>
    <name type="scientific">Ajellomyces capsulatus (strain NAm1 / WU24)</name>
    <name type="common">Darling's disease fungus</name>
    <name type="synonym">Histoplasma capsulatum</name>
    <dbReference type="NCBI Taxonomy" id="2059318"/>
    <lineage>
        <taxon>Eukaryota</taxon>
        <taxon>Fungi</taxon>
        <taxon>Dikarya</taxon>
        <taxon>Ascomycota</taxon>
        <taxon>Pezizomycotina</taxon>
        <taxon>Eurotiomycetes</taxon>
        <taxon>Eurotiomycetidae</taxon>
        <taxon>Onygenales</taxon>
        <taxon>Ajellomycetaceae</taxon>
        <taxon>Histoplasma</taxon>
    </lineage>
</organism>
<gene>
    <name type="primary">EGD2</name>
    <name type="ORF">HCAG_05099</name>
</gene>
<sequence>MSSSRIEELPDDDVPKTTVEDAADSSESEVEGAEEPTIPGGAAVTVHSRNEKKARKAIGKLGLKHVPGITRVTLRRPKGILFVINQPDVYRSPSSNTWIIFGEAKIEDLNSQAQASAAQQLAAAEAAGSNEHAGHDHASHDHGKGKAVESADKKDEEEDDEEVFDASGLEAKDIELVMAQASVSRNKAIKALKENDNDIVNSIMALSV</sequence>
<protein>
    <recommendedName>
        <fullName>Nascent polypeptide-associated complex subunit alpha</fullName>
        <shortName>NAC-alpha</shortName>
    </recommendedName>
    <alternativeName>
        <fullName>Alpha-NAC</fullName>
    </alternativeName>
</protein>
<proteinExistence type="inferred from homology"/>
<accession>A6R641</accession>
<dbReference type="EMBL" id="CH476659">
    <property type="protein sequence ID" value="EDN08600.1"/>
    <property type="status" value="ALT_SEQ"/>
    <property type="molecule type" value="Genomic_DNA"/>
</dbReference>
<dbReference type="SMR" id="A6R641"/>
<dbReference type="STRING" id="339724.A6R641"/>
<dbReference type="KEGG" id="aje:HCAG_05099"/>
<dbReference type="HOGENOM" id="CLU_057806_2_0_1"/>
<dbReference type="OrthoDB" id="13105at299071"/>
<dbReference type="Proteomes" id="UP000009297">
    <property type="component" value="Unassembled WGS sequence"/>
</dbReference>
<dbReference type="GO" id="GO:0005854">
    <property type="term" value="C:nascent polypeptide-associated complex"/>
    <property type="evidence" value="ECO:0007669"/>
    <property type="project" value="InterPro"/>
</dbReference>
<dbReference type="GO" id="GO:0005634">
    <property type="term" value="C:nucleus"/>
    <property type="evidence" value="ECO:0007669"/>
    <property type="project" value="UniProtKB-SubCell"/>
</dbReference>
<dbReference type="GO" id="GO:0015031">
    <property type="term" value="P:protein transport"/>
    <property type="evidence" value="ECO:0007669"/>
    <property type="project" value="UniProtKB-KW"/>
</dbReference>
<dbReference type="CDD" id="cd22054">
    <property type="entry name" value="NAC_NACA"/>
    <property type="match status" value="1"/>
</dbReference>
<dbReference type="CDD" id="cd14358">
    <property type="entry name" value="UBA_NAC_euk"/>
    <property type="match status" value="1"/>
</dbReference>
<dbReference type="FunFam" id="2.20.70.30:FF:000002">
    <property type="entry name" value="Nascent polypeptide-associated complex (NAC), alpha subunit"/>
    <property type="match status" value="1"/>
</dbReference>
<dbReference type="Gene3D" id="1.10.8.10">
    <property type="entry name" value="DNA helicase RuvA subunit, C-terminal domain"/>
    <property type="match status" value="1"/>
</dbReference>
<dbReference type="Gene3D" id="2.20.70.30">
    <property type="entry name" value="Nascent polypeptide-associated complex domain"/>
    <property type="match status" value="1"/>
</dbReference>
<dbReference type="InterPro" id="IPR016641">
    <property type="entry name" value="EGD2/NACA0like"/>
</dbReference>
<dbReference type="InterPro" id="IPR044034">
    <property type="entry name" value="NAC-like_UBA"/>
</dbReference>
<dbReference type="InterPro" id="IPR038187">
    <property type="entry name" value="NAC_A/B_dom_sf"/>
</dbReference>
<dbReference type="InterPro" id="IPR002715">
    <property type="entry name" value="Nas_poly-pep-assoc_cplx_dom"/>
</dbReference>
<dbReference type="PANTHER" id="PTHR21713">
    <property type="entry name" value="NASCENT POLYPEPTIDE ASSOCIATED COMPLEX ALPHA SUBUNIT-RELATED"/>
    <property type="match status" value="1"/>
</dbReference>
<dbReference type="Pfam" id="PF01849">
    <property type="entry name" value="NAC"/>
    <property type="match status" value="1"/>
</dbReference>
<dbReference type="Pfam" id="PF19026">
    <property type="entry name" value="UBA_HYPK"/>
    <property type="match status" value="1"/>
</dbReference>
<dbReference type="PIRSF" id="PIRSF015901">
    <property type="entry name" value="NAC_alpha"/>
    <property type="match status" value="1"/>
</dbReference>
<dbReference type="SMART" id="SM01407">
    <property type="entry name" value="NAC"/>
    <property type="match status" value="1"/>
</dbReference>
<dbReference type="PROSITE" id="PS51151">
    <property type="entry name" value="NAC_AB"/>
    <property type="match status" value="1"/>
</dbReference>
<name>NACA_AJECN</name>
<evidence type="ECO:0000250" key="1"/>
<evidence type="ECO:0000255" key="2">
    <source>
        <dbReference type="PROSITE-ProRule" id="PRU00507"/>
    </source>
</evidence>
<evidence type="ECO:0000256" key="3">
    <source>
        <dbReference type="SAM" id="MobiDB-lite"/>
    </source>
</evidence>
<evidence type="ECO:0000305" key="4"/>
<feature type="chain" id="PRO_0000310160" description="Nascent polypeptide-associated complex subunit alpha">
    <location>
        <begin position="1"/>
        <end position="208"/>
    </location>
</feature>
<feature type="domain" description="NAC-A/B" evidence="2">
    <location>
        <begin position="48"/>
        <end position="113"/>
    </location>
</feature>
<feature type="domain" description="UBA">
    <location>
        <begin position="169"/>
        <end position="208"/>
    </location>
</feature>
<feature type="region of interest" description="Disordered" evidence="3">
    <location>
        <begin position="1"/>
        <end position="50"/>
    </location>
</feature>
<feature type="region of interest" description="Disordered" evidence="3">
    <location>
        <begin position="120"/>
        <end position="166"/>
    </location>
</feature>
<feature type="compositionally biased region" description="Basic and acidic residues" evidence="3">
    <location>
        <begin position="1"/>
        <end position="19"/>
    </location>
</feature>
<feature type="compositionally biased region" description="Acidic residues" evidence="3">
    <location>
        <begin position="21"/>
        <end position="34"/>
    </location>
</feature>
<feature type="compositionally biased region" description="Low complexity" evidence="3">
    <location>
        <begin position="120"/>
        <end position="131"/>
    </location>
</feature>
<feature type="compositionally biased region" description="Basic and acidic residues" evidence="3">
    <location>
        <begin position="132"/>
        <end position="154"/>
    </location>
</feature>
<feature type="compositionally biased region" description="Acidic residues" evidence="3">
    <location>
        <begin position="155"/>
        <end position="164"/>
    </location>
</feature>